<protein>
    <recommendedName>
        <fullName evidence="1">Acetate kinase</fullName>
        <ecNumber evidence="1">2.7.2.1</ecNumber>
    </recommendedName>
    <alternativeName>
        <fullName evidence="1">Acetokinase</fullName>
    </alternativeName>
</protein>
<feature type="chain" id="PRO_0000107647" description="Acetate kinase">
    <location>
        <begin position="1"/>
        <end position="400"/>
    </location>
</feature>
<feature type="active site" description="Proton donor/acceptor" evidence="1">
    <location>
        <position position="150"/>
    </location>
</feature>
<feature type="binding site" evidence="1">
    <location>
        <position position="10"/>
    </location>
    <ligand>
        <name>Mg(2+)</name>
        <dbReference type="ChEBI" id="CHEBI:18420"/>
    </ligand>
</feature>
<feature type="binding site" evidence="1">
    <location>
        <position position="17"/>
    </location>
    <ligand>
        <name>ATP</name>
        <dbReference type="ChEBI" id="CHEBI:30616"/>
    </ligand>
</feature>
<feature type="binding site" evidence="1">
    <location>
        <position position="91"/>
    </location>
    <ligand>
        <name>substrate</name>
    </ligand>
</feature>
<feature type="binding site" evidence="1">
    <location>
        <begin position="210"/>
        <end position="214"/>
    </location>
    <ligand>
        <name>ATP</name>
        <dbReference type="ChEBI" id="CHEBI:30616"/>
    </ligand>
</feature>
<feature type="binding site" evidence="1">
    <location>
        <begin position="285"/>
        <end position="287"/>
    </location>
    <ligand>
        <name>ATP</name>
        <dbReference type="ChEBI" id="CHEBI:30616"/>
    </ligand>
</feature>
<feature type="binding site" evidence="1">
    <location>
        <begin position="333"/>
        <end position="337"/>
    </location>
    <ligand>
        <name>ATP</name>
        <dbReference type="ChEBI" id="CHEBI:30616"/>
    </ligand>
</feature>
<feature type="binding site" evidence="1">
    <location>
        <position position="387"/>
    </location>
    <ligand>
        <name>Mg(2+)</name>
        <dbReference type="ChEBI" id="CHEBI:18420"/>
    </ligand>
</feature>
<feature type="site" description="Transition state stabilizer" evidence="1">
    <location>
        <position position="182"/>
    </location>
</feature>
<feature type="site" description="Transition state stabilizer" evidence="1">
    <location>
        <position position="243"/>
    </location>
</feature>
<name>ACKA_YERPS</name>
<keyword id="KW-0067">ATP-binding</keyword>
<keyword id="KW-0963">Cytoplasm</keyword>
<keyword id="KW-0418">Kinase</keyword>
<keyword id="KW-0460">Magnesium</keyword>
<keyword id="KW-0479">Metal-binding</keyword>
<keyword id="KW-0547">Nucleotide-binding</keyword>
<keyword id="KW-0808">Transferase</keyword>
<proteinExistence type="inferred from homology"/>
<comment type="function">
    <text evidence="1">Catalyzes the formation of acetyl phosphate from acetate and ATP. Can also catalyze the reverse reaction.</text>
</comment>
<comment type="catalytic activity">
    <reaction evidence="1">
        <text>acetate + ATP = acetyl phosphate + ADP</text>
        <dbReference type="Rhea" id="RHEA:11352"/>
        <dbReference type="ChEBI" id="CHEBI:22191"/>
        <dbReference type="ChEBI" id="CHEBI:30089"/>
        <dbReference type="ChEBI" id="CHEBI:30616"/>
        <dbReference type="ChEBI" id="CHEBI:456216"/>
        <dbReference type="EC" id="2.7.2.1"/>
    </reaction>
</comment>
<comment type="cofactor">
    <cofactor evidence="1">
        <name>Mg(2+)</name>
        <dbReference type="ChEBI" id="CHEBI:18420"/>
    </cofactor>
    <cofactor evidence="1">
        <name>Mn(2+)</name>
        <dbReference type="ChEBI" id="CHEBI:29035"/>
    </cofactor>
    <text evidence="1">Mg(2+). Can also accept Mn(2+).</text>
</comment>
<comment type="pathway">
    <text evidence="1">Metabolic intermediate biosynthesis; acetyl-CoA biosynthesis; acetyl-CoA from acetate: step 1/2.</text>
</comment>
<comment type="subunit">
    <text evidence="1">Homodimer.</text>
</comment>
<comment type="subcellular location">
    <subcellularLocation>
        <location evidence="1">Cytoplasm</location>
    </subcellularLocation>
</comment>
<comment type="similarity">
    <text evidence="1">Belongs to the acetokinase family.</text>
</comment>
<sequence length="400" mass="43004">MSSKLVLVLNCGSSSLKFAIIDATNGEEHISGLAECFHLPEARIKWKVDGGKQEAALGAGAAHSEALNFIVNTILAQKPALSAQLTAIGHRIVHGGEKFTSSVIVTDDVIQGIKDSIPFAPLHNPAHLIGIAEALKSFPNLADKNVAVFDTAFHQTMPEESYLYALPYSLYKDHGIRRYGAHGTSHFYVSQEAAKILNKPLEELNVITCHLGNGGSVTAVRNGKCVDTSMGLTPLEGLVMGTRSGDLDPAIIFHLHDAMGMSVDQINTLLTKESGLLGLTEVTSDCRYVEDNYATKADAKRAMDVFCHRLAKYIGSYTALMDGRLDAVVFTGGIGENAAMVRELTLDKLGLLGFEIDHERNMAARFGKSGTITKDSSRLALVIPTNEELVIAQDAARLTA</sequence>
<organism>
    <name type="scientific">Yersinia pseudotuberculosis serotype I (strain IP32953)</name>
    <dbReference type="NCBI Taxonomy" id="273123"/>
    <lineage>
        <taxon>Bacteria</taxon>
        <taxon>Pseudomonadati</taxon>
        <taxon>Pseudomonadota</taxon>
        <taxon>Gammaproteobacteria</taxon>
        <taxon>Enterobacterales</taxon>
        <taxon>Yersiniaceae</taxon>
        <taxon>Yersinia</taxon>
    </lineage>
</organism>
<evidence type="ECO:0000255" key="1">
    <source>
        <dbReference type="HAMAP-Rule" id="MF_00020"/>
    </source>
</evidence>
<gene>
    <name evidence="1" type="primary">ackA</name>
    <name type="ordered locus">YPTB2597</name>
</gene>
<dbReference type="EC" id="2.7.2.1" evidence="1"/>
<dbReference type="EMBL" id="BX936398">
    <property type="protein sequence ID" value="CAH21835.1"/>
    <property type="molecule type" value="Genomic_DNA"/>
</dbReference>
<dbReference type="RefSeq" id="WP_011192678.1">
    <property type="nucleotide sequence ID" value="NC_006155.1"/>
</dbReference>
<dbReference type="SMR" id="Q668Z0"/>
<dbReference type="KEGG" id="ypo:BZ17_4042"/>
<dbReference type="KEGG" id="yps:YPTB2597"/>
<dbReference type="PATRIC" id="fig|273123.14.peg.4245"/>
<dbReference type="UniPathway" id="UPA00340">
    <property type="reaction ID" value="UER00458"/>
</dbReference>
<dbReference type="Proteomes" id="UP000001011">
    <property type="component" value="Chromosome"/>
</dbReference>
<dbReference type="GO" id="GO:0005829">
    <property type="term" value="C:cytosol"/>
    <property type="evidence" value="ECO:0007669"/>
    <property type="project" value="TreeGrafter"/>
</dbReference>
<dbReference type="GO" id="GO:0008776">
    <property type="term" value="F:acetate kinase activity"/>
    <property type="evidence" value="ECO:0007669"/>
    <property type="project" value="UniProtKB-UniRule"/>
</dbReference>
<dbReference type="GO" id="GO:0005524">
    <property type="term" value="F:ATP binding"/>
    <property type="evidence" value="ECO:0007669"/>
    <property type="project" value="UniProtKB-KW"/>
</dbReference>
<dbReference type="GO" id="GO:0000287">
    <property type="term" value="F:magnesium ion binding"/>
    <property type="evidence" value="ECO:0007669"/>
    <property type="project" value="UniProtKB-UniRule"/>
</dbReference>
<dbReference type="GO" id="GO:0006083">
    <property type="term" value="P:acetate metabolic process"/>
    <property type="evidence" value="ECO:0007669"/>
    <property type="project" value="TreeGrafter"/>
</dbReference>
<dbReference type="GO" id="GO:0006085">
    <property type="term" value="P:acetyl-CoA biosynthetic process"/>
    <property type="evidence" value="ECO:0007669"/>
    <property type="project" value="UniProtKB-UniRule"/>
</dbReference>
<dbReference type="CDD" id="cd24010">
    <property type="entry name" value="ASKHA_NBD_AcK_PK"/>
    <property type="match status" value="1"/>
</dbReference>
<dbReference type="FunFam" id="3.30.420.40:FF:000041">
    <property type="entry name" value="Acetate kinase"/>
    <property type="match status" value="1"/>
</dbReference>
<dbReference type="FunFam" id="3.30.420.40:FF:000042">
    <property type="entry name" value="Acetate kinase"/>
    <property type="match status" value="1"/>
</dbReference>
<dbReference type="Gene3D" id="3.30.420.40">
    <property type="match status" value="2"/>
</dbReference>
<dbReference type="HAMAP" id="MF_00020">
    <property type="entry name" value="Acetate_kinase"/>
    <property type="match status" value="1"/>
</dbReference>
<dbReference type="InterPro" id="IPR004372">
    <property type="entry name" value="Ac/propionate_kinase"/>
</dbReference>
<dbReference type="InterPro" id="IPR000890">
    <property type="entry name" value="Aliphatic_acid_kin_short-chain"/>
</dbReference>
<dbReference type="InterPro" id="IPR023865">
    <property type="entry name" value="Aliphatic_acid_kinase_CS"/>
</dbReference>
<dbReference type="InterPro" id="IPR043129">
    <property type="entry name" value="ATPase_NBD"/>
</dbReference>
<dbReference type="NCBIfam" id="TIGR00016">
    <property type="entry name" value="ackA"/>
    <property type="match status" value="1"/>
</dbReference>
<dbReference type="PANTHER" id="PTHR21060">
    <property type="entry name" value="ACETATE KINASE"/>
    <property type="match status" value="1"/>
</dbReference>
<dbReference type="PANTHER" id="PTHR21060:SF21">
    <property type="entry name" value="ACETATE KINASE"/>
    <property type="match status" value="1"/>
</dbReference>
<dbReference type="Pfam" id="PF00871">
    <property type="entry name" value="Acetate_kinase"/>
    <property type="match status" value="1"/>
</dbReference>
<dbReference type="PIRSF" id="PIRSF000722">
    <property type="entry name" value="Acetate_prop_kin"/>
    <property type="match status" value="1"/>
</dbReference>
<dbReference type="PRINTS" id="PR00471">
    <property type="entry name" value="ACETATEKNASE"/>
</dbReference>
<dbReference type="SUPFAM" id="SSF53067">
    <property type="entry name" value="Actin-like ATPase domain"/>
    <property type="match status" value="2"/>
</dbReference>
<dbReference type="PROSITE" id="PS01075">
    <property type="entry name" value="ACETATE_KINASE_1"/>
    <property type="match status" value="1"/>
</dbReference>
<dbReference type="PROSITE" id="PS01076">
    <property type="entry name" value="ACETATE_KINASE_2"/>
    <property type="match status" value="1"/>
</dbReference>
<reference key="1">
    <citation type="journal article" date="2004" name="Proc. Natl. Acad. Sci. U.S.A.">
        <title>Insights into the evolution of Yersinia pestis through whole-genome comparison with Yersinia pseudotuberculosis.</title>
        <authorList>
            <person name="Chain P.S.G."/>
            <person name="Carniel E."/>
            <person name="Larimer F.W."/>
            <person name="Lamerdin J."/>
            <person name="Stoutland P.O."/>
            <person name="Regala W.M."/>
            <person name="Georgescu A.M."/>
            <person name="Vergez L.M."/>
            <person name="Land M.L."/>
            <person name="Motin V.L."/>
            <person name="Brubaker R.R."/>
            <person name="Fowler J."/>
            <person name="Hinnebusch J."/>
            <person name="Marceau M."/>
            <person name="Medigue C."/>
            <person name="Simonet M."/>
            <person name="Chenal-Francisque V."/>
            <person name="Souza B."/>
            <person name="Dacheux D."/>
            <person name="Elliott J.M."/>
            <person name="Derbise A."/>
            <person name="Hauser L.J."/>
            <person name="Garcia E."/>
        </authorList>
    </citation>
    <scope>NUCLEOTIDE SEQUENCE [LARGE SCALE GENOMIC DNA]</scope>
    <source>
        <strain>IP32953</strain>
    </source>
</reference>
<accession>Q668Z0</accession>